<organism>
    <name type="scientific">Agrostis stolonifera</name>
    <name type="common">Creeping bentgrass</name>
    <dbReference type="NCBI Taxonomy" id="63632"/>
    <lineage>
        <taxon>Eukaryota</taxon>
        <taxon>Viridiplantae</taxon>
        <taxon>Streptophyta</taxon>
        <taxon>Embryophyta</taxon>
        <taxon>Tracheophyta</taxon>
        <taxon>Spermatophyta</taxon>
        <taxon>Magnoliopsida</taxon>
        <taxon>Liliopsida</taxon>
        <taxon>Poales</taxon>
        <taxon>Poaceae</taxon>
        <taxon>BOP clade</taxon>
        <taxon>Pooideae</taxon>
        <taxon>Poodae</taxon>
        <taxon>Poeae</taxon>
        <taxon>Poeae Chloroplast Group 1 (Aveneae type)</taxon>
        <taxon>Agrostidodinae</taxon>
        <taxon>Agrostidinae</taxon>
        <taxon>Agrostis</taxon>
    </lineage>
</organism>
<protein>
    <recommendedName>
        <fullName evidence="1">Cytochrome b559 subunit alpha</fullName>
    </recommendedName>
    <alternativeName>
        <fullName evidence="1">PSII reaction center subunit V</fullName>
    </alternativeName>
</protein>
<gene>
    <name evidence="1" type="primary">psbE</name>
</gene>
<sequence length="83" mass="9445">MSGSTGERSFADIITSIRYWVIHSITIPSLFIAGWLFVSTGLAYDVFGSPRPNEYFTESRQGIPLITDRFDSLEQLDEFSRSF</sequence>
<keyword id="KW-0150">Chloroplast</keyword>
<keyword id="KW-0249">Electron transport</keyword>
<keyword id="KW-0349">Heme</keyword>
<keyword id="KW-0408">Iron</keyword>
<keyword id="KW-0472">Membrane</keyword>
<keyword id="KW-0479">Metal-binding</keyword>
<keyword id="KW-0602">Photosynthesis</keyword>
<keyword id="KW-0604">Photosystem II</keyword>
<keyword id="KW-0934">Plastid</keyword>
<keyword id="KW-0793">Thylakoid</keyword>
<keyword id="KW-0812">Transmembrane</keyword>
<keyword id="KW-1133">Transmembrane helix</keyword>
<keyword id="KW-0813">Transport</keyword>
<evidence type="ECO:0000255" key="1">
    <source>
        <dbReference type="HAMAP-Rule" id="MF_00642"/>
    </source>
</evidence>
<feature type="chain" id="PRO_0000275701" description="Cytochrome b559 subunit alpha">
    <location>
        <begin position="1"/>
        <end position="83"/>
    </location>
</feature>
<feature type="transmembrane region" description="Helical" evidence="1">
    <location>
        <begin position="21"/>
        <end position="35"/>
    </location>
</feature>
<feature type="binding site" description="axial binding residue" evidence="1">
    <location>
        <position position="23"/>
    </location>
    <ligand>
        <name>heme</name>
        <dbReference type="ChEBI" id="CHEBI:30413"/>
        <note>ligand shared with beta subunit</note>
    </ligand>
    <ligandPart>
        <name>Fe</name>
        <dbReference type="ChEBI" id="CHEBI:18248"/>
    </ligandPart>
</feature>
<dbReference type="EMBL" id="EF115543">
    <property type="protein sequence ID" value="ABK79597.1"/>
    <property type="molecule type" value="Genomic_DNA"/>
</dbReference>
<dbReference type="RefSeq" id="YP_874753.1">
    <property type="nucleotide sequence ID" value="NC_008591.1"/>
</dbReference>
<dbReference type="SMR" id="A1EA25"/>
<dbReference type="GeneID" id="4524995"/>
<dbReference type="GO" id="GO:0009535">
    <property type="term" value="C:chloroplast thylakoid membrane"/>
    <property type="evidence" value="ECO:0007669"/>
    <property type="project" value="UniProtKB-SubCell"/>
</dbReference>
<dbReference type="GO" id="GO:0009539">
    <property type="term" value="C:photosystem II reaction center"/>
    <property type="evidence" value="ECO:0007669"/>
    <property type="project" value="InterPro"/>
</dbReference>
<dbReference type="GO" id="GO:0009055">
    <property type="term" value="F:electron transfer activity"/>
    <property type="evidence" value="ECO:0007669"/>
    <property type="project" value="UniProtKB-UniRule"/>
</dbReference>
<dbReference type="GO" id="GO:0020037">
    <property type="term" value="F:heme binding"/>
    <property type="evidence" value="ECO:0007669"/>
    <property type="project" value="InterPro"/>
</dbReference>
<dbReference type="GO" id="GO:0005506">
    <property type="term" value="F:iron ion binding"/>
    <property type="evidence" value="ECO:0007669"/>
    <property type="project" value="UniProtKB-UniRule"/>
</dbReference>
<dbReference type="GO" id="GO:0009767">
    <property type="term" value="P:photosynthetic electron transport chain"/>
    <property type="evidence" value="ECO:0007669"/>
    <property type="project" value="InterPro"/>
</dbReference>
<dbReference type="Gene3D" id="1.20.5.860">
    <property type="entry name" value="Photosystem II cytochrome b559, alpha subunit"/>
    <property type="match status" value="1"/>
</dbReference>
<dbReference type="HAMAP" id="MF_00642">
    <property type="entry name" value="PSII_PsbE"/>
    <property type="match status" value="1"/>
</dbReference>
<dbReference type="InterPro" id="IPR006217">
    <property type="entry name" value="PSII_cyt_b559_asu"/>
</dbReference>
<dbReference type="InterPro" id="IPR037025">
    <property type="entry name" value="PSII_cyt_b559_asu_sf"/>
</dbReference>
<dbReference type="InterPro" id="IPR006216">
    <property type="entry name" value="PSII_cyt_b559_CS"/>
</dbReference>
<dbReference type="InterPro" id="IPR013081">
    <property type="entry name" value="PSII_cyt_b559_N"/>
</dbReference>
<dbReference type="InterPro" id="IPR013082">
    <property type="entry name" value="PSII_cytb559_asu_lum"/>
</dbReference>
<dbReference type="NCBIfam" id="TIGR01332">
    <property type="entry name" value="cyt_b559_alpha"/>
    <property type="match status" value="1"/>
</dbReference>
<dbReference type="PANTHER" id="PTHR33391:SF13">
    <property type="entry name" value="CYTOCHROME B559 SUBUNIT ALPHA"/>
    <property type="match status" value="1"/>
</dbReference>
<dbReference type="PANTHER" id="PTHR33391">
    <property type="entry name" value="CYTOCHROME B559 SUBUNIT BETA-RELATED"/>
    <property type="match status" value="1"/>
</dbReference>
<dbReference type="Pfam" id="PF00283">
    <property type="entry name" value="Cytochrom_B559"/>
    <property type="match status" value="1"/>
</dbReference>
<dbReference type="Pfam" id="PF00284">
    <property type="entry name" value="Cytochrom_B559a"/>
    <property type="match status" value="1"/>
</dbReference>
<dbReference type="PIRSF" id="PIRSF000036">
    <property type="entry name" value="PsbE"/>
    <property type="match status" value="1"/>
</dbReference>
<dbReference type="SUPFAM" id="SSF161045">
    <property type="entry name" value="Cytochrome b559 subunits"/>
    <property type="match status" value="1"/>
</dbReference>
<dbReference type="PROSITE" id="PS00537">
    <property type="entry name" value="CYTOCHROME_B559"/>
    <property type="match status" value="1"/>
</dbReference>
<comment type="function">
    <text evidence="1">This b-type cytochrome is tightly associated with the reaction center of photosystem II (PSII). PSII is a light-driven water:plastoquinone oxidoreductase that uses light energy to abstract electrons from H(2)O, generating O(2) and a proton gradient subsequently used for ATP formation. It consists of a core antenna complex that captures photons, and an electron transfer chain that converts photonic excitation into a charge separation.</text>
</comment>
<comment type="cofactor">
    <cofactor evidence="1">
        <name>heme b</name>
        <dbReference type="ChEBI" id="CHEBI:60344"/>
    </cofactor>
    <text evidence="1">With its partner (PsbF) binds heme. PSII binds additional chlorophylls, carotenoids and specific lipids.</text>
</comment>
<comment type="subunit">
    <text evidence="1">Heterodimer of an alpha subunit and a beta subunit. PSII is composed of 1 copy each of membrane proteins PsbA, PsbB, PsbC, PsbD, PsbE, PsbF, PsbH, PsbI, PsbJ, PsbK, PsbL, PsbM, PsbT, PsbX, PsbY, PsbZ, Psb30/Ycf12, at least 3 peripheral proteins of the oxygen-evolving complex and a large number of cofactors. It forms dimeric complexes.</text>
</comment>
<comment type="subcellular location">
    <subcellularLocation>
        <location evidence="1">Plastid</location>
        <location evidence="1">Chloroplast thylakoid membrane</location>
        <topology evidence="1">Single-pass membrane protein</topology>
    </subcellularLocation>
</comment>
<comment type="similarity">
    <text evidence="1">Belongs to the PsbE/PsbF family.</text>
</comment>
<proteinExistence type="inferred from homology"/>
<geneLocation type="chloroplast"/>
<name>PSBE_AGRST</name>
<reference key="1">
    <citation type="journal article" date="2007" name="Theor. Appl. Genet.">
        <title>Complete chloroplast genome sequences of Hordeum vulgare, Sorghum bicolor and Agrostis stolonifera, and comparative analyses with other grass genomes.</title>
        <authorList>
            <person name="Saski C."/>
            <person name="Lee S.-B."/>
            <person name="Fjellheim S."/>
            <person name="Guda C."/>
            <person name="Jansen R.K."/>
            <person name="Luo H."/>
            <person name="Tomkins J."/>
            <person name="Rognli O.A."/>
            <person name="Daniell H."/>
            <person name="Clarke J.L."/>
        </authorList>
    </citation>
    <scope>NUCLEOTIDE SEQUENCE [LARGE SCALE GENOMIC DNA]</scope>
    <source>
        <strain>cv. Penn A-4</strain>
    </source>
</reference>
<accession>A1EA25</accession>